<sequence length="97" mass="11141">MAFFSSRVRALFILVLVLPLCSETGFARSKKTRKEPDCDVYRSHLFFCTREMDPICGTNGKSYANPCIFCSEKLGRNEKFDFGHWGHCREYTSAARS</sequence>
<organism>
    <name type="scientific">Sus scrofa</name>
    <name type="common">Pig</name>
    <dbReference type="NCBI Taxonomy" id="9823"/>
    <lineage>
        <taxon>Eukaryota</taxon>
        <taxon>Metazoa</taxon>
        <taxon>Chordata</taxon>
        <taxon>Craniata</taxon>
        <taxon>Vertebrata</taxon>
        <taxon>Euteleostomi</taxon>
        <taxon>Mammalia</taxon>
        <taxon>Eutheria</taxon>
        <taxon>Laurasiatheria</taxon>
        <taxon>Artiodactyla</taxon>
        <taxon>Suina</taxon>
        <taxon>Suidae</taxon>
        <taxon>Sus</taxon>
    </lineage>
</organism>
<accession>P26461</accession>
<comment type="function">
    <text>Inhibits acrosin.</text>
</comment>
<comment type="subcellular location">
    <subcellularLocation>
        <location>Secreted</location>
    </subcellularLocation>
</comment>
<comment type="tissue specificity">
    <text>Seminal plasma.</text>
</comment>
<dbReference type="EMBL" id="U09985">
    <property type="protein sequence ID" value="AAA18798.1"/>
    <property type="molecule type" value="mRNA"/>
</dbReference>
<dbReference type="PIR" id="S20394">
    <property type="entry name" value="S20394"/>
</dbReference>
<dbReference type="RefSeq" id="NP_999042.1">
    <property type="nucleotide sequence ID" value="NM_213877.1"/>
</dbReference>
<dbReference type="RefSeq" id="XP_020936203.1">
    <property type="nucleotide sequence ID" value="XM_021080544.1"/>
</dbReference>
<dbReference type="BioGRID" id="1149044">
    <property type="interactions" value="2"/>
</dbReference>
<dbReference type="FunCoup" id="P26461">
    <property type="interactions" value="1"/>
</dbReference>
<dbReference type="STRING" id="9823.ENSSSCP00000019802"/>
<dbReference type="MEROPS" id="I01.979"/>
<dbReference type="PaxDb" id="9823-ENSSSCP00000019802"/>
<dbReference type="Ensembl" id="ENSSSCT00000079606.2">
    <property type="protein sequence ID" value="ENSSSCP00000072415.2"/>
    <property type="gene ID" value="ENSSSCG00000029257.4"/>
</dbReference>
<dbReference type="Ensembl" id="ENSSSCT00090045438">
    <property type="protein sequence ID" value="ENSSSCP00090028191"/>
    <property type="gene ID" value="ENSSSCG00090025714"/>
</dbReference>
<dbReference type="Ensembl" id="ENSSSCT00115027143">
    <property type="protein sequence ID" value="ENSSSCP00115025729"/>
    <property type="gene ID" value="ENSSSCG00115015556"/>
</dbReference>
<dbReference type="GeneID" id="396905"/>
<dbReference type="KEGG" id="ssc:396905"/>
<dbReference type="eggNOG" id="ENOG502SEPY">
    <property type="taxonomic scope" value="Eukaryota"/>
</dbReference>
<dbReference type="GeneTree" id="ENSGT00940000165308"/>
<dbReference type="HOGENOM" id="CLU_169765_2_0_1"/>
<dbReference type="InParanoid" id="P26461"/>
<dbReference type="OrthoDB" id="126772at2759"/>
<dbReference type="Proteomes" id="UP000008227">
    <property type="component" value="Chromosome 2"/>
</dbReference>
<dbReference type="Proteomes" id="UP000314985">
    <property type="component" value="Unplaced"/>
</dbReference>
<dbReference type="Proteomes" id="UP000694570">
    <property type="component" value="Unplaced"/>
</dbReference>
<dbReference type="Proteomes" id="UP000694571">
    <property type="component" value="Unplaced"/>
</dbReference>
<dbReference type="Proteomes" id="UP000694720">
    <property type="component" value="Unplaced"/>
</dbReference>
<dbReference type="Proteomes" id="UP000694722">
    <property type="component" value="Unplaced"/>
</dbReference>
<dbReference type="Proteomes" id="UP000694723">
    <property type="component" value="Unplaced"/>
</dbReference>
<dbReference type="Proteomes" id="UP000694724">
    <property type="component" value="Unplaced"/>
</dbReference>
<dbReference type="Proteomes" id="UP000694725">
    <property type="component" value="Unplaced"/>
</dbReference>
<dbReference type="Proteomes" id="UP000694726">
    <property type="component" value="Unplaced"/>
</dbReference>
<dbReference type="Proteomes" id="UP000694727">
    <property type="component" value="Unplaced"/>
</dbReference>
<dbReference type="Proteomes" id="UP000694728">
    <property type="component" value="Unplaced"/>
</dbReference>
<dbReference type="Bgee" id="ENSSSCG00000029257">
    <property type="expression patterns" value="Expressed in epididymis and 43 other cell types or tissues"/>
</dbReference>
<dbReference type="ExpressionAtlas" id="P26461">
    <property type="expression patterns" value="baseline and differential"/>
</dbReference>
<dbReference type="GO" id="GO:0005576">
    <property type="term" value="C:extracellular region"/>
    <property type="evidence" value="ECO:0007669"/>
    <property type="project" value="UniProtKB-SubCell"/>
</dbReference>
<dbReference type="GO" id="GO:0004867">
    <property type="term" value="F:serine-type endopeptidase inhibitor activity"/>
    <property type="evidence" value="ECO:0007669"/>
    <property type="project" value="UniProtKB-KW"/>
</dbReference>
<dbReference type="Gene3D" id="3.30.60.30">
    <property type="match status" value="1"/>
</dbReference>
<dbReference type="InterPro" id="IPR002350">
    <property type="entry name" value="Kazal_dom"/>
</dbReference>
<dbReference type="InterPro" id="IPR036058">
    <property type="entry name" value="Kazal_dom_sf"/>
</dbReference>
<dbReference type="PANTHER" id="PTHR21312">
    <property type="entry name" value="SERINE PROTEASE INHIBITOR"/>
    <property type="match status" value="1"/>
</dbReference>
<dbReference type="PANTHER" id="PTHR21312:SF30">
    <property type="entry name" value="SERINE PROTEASE INHIBITOR KAZAL-TYPE 11-RELATED"/>
    <property type="match status" value="1"/>
</dbReference>
<dbReference type="Pfam" id="PF00050">
    <property type="entry name" value="Kazal_1"/>
    <property type="match status" value="1"/>
</dbReference>
<dbReference type="SMART" id="SM00280">
    <property type="entry name" value="KAZAL"/>
    <property type="match status" value="1"/>
</dbReference>
<dbReference type="SUPFAM" id="SSF100895">
    <property type="entry name" value="Kazal-type serine protease inhibitors"/>
    <property type="match status" value="1"/>
</dbReference>
<dbReference type="PROSITE" id="PS00282">
    <property type="entry name" value="KAZAL_1"/>
    <property type="match status" value="1"/>
</dbReference>
<dbReference type="PROSITE" id="PS51465">
    <property type="entry name" value="KAZAL_2"/>
    <property type="match status" value="1"/>
</dbReference>
<reference key="1">
    <citation type="journal article" date="1994" name="DNA Cell Biol.">
        <title>Molecular cloning and sequence analysis of the cDNA encoding porcine acrosin inhibitor.</title>
        <authorList>
            <person name="Kwok S.C."/>
            <person name="Dai G."/>
            <person name="McMurtry J.P."/>
        </authorList>
    </citation>
    <scope>NUCLEOTIDE SEQUENCE [MRNA]</scope>
    <source>
        <tissue>Seminal vesicle</tissue>
    </source>
</reference>
<reference key="2">
    <citation type="journal article" date="1992" name="FEBS Lett.">
        <title>The complete primary structure of three isoforms of a boar sperm-associated acrosin inhibitor.</title>
        <authorList>
            <person name="Jonakova V."/>
            <person name="Calvete J.J."/>
            <person name="Mann K."/>
            <person name="Schaefer W."/>
            <person name="Schmid E.R."/>
            <person name="Toepfer-Petersen E."/>
        </authorList>
    </citation>
    <scope>PROTEIN SEQUENCE OF 27-97</scope>
    <source>
        <tissue>Semen</tissue>
    </source>
</reference>
<reference key="3">
    <citation type="journal article" date="1996" name="FEBS Lett.">
        <title>Mapping the heparin-binding domain of boar spermadhesins.</title>
        <authorList>
            <person name="Calvete J.J."/>
            <person name="Dostalova Z."/>
            <person name="Sanz L."/>
            <person name="Adermann K."/>
            <person name="Thole H.H."/>
            <person name="Toepfer-Petersen E."/>
        </authorList>
    </citation>
    <scope>PROTEIN SEQUENCE OF 27-39 AND 44-52</scope>
    <scope>CHARACTERIZATION</scope>
    <source>
        <tissue>Seminal plasma</tissue>
    </source>
</reference>
<evidence type="ECO:0000255" key="1">
    <source>
        <dbReference type="PROSITE-ProRule" id="PRU00798"/>
    </source>
</evidence>
<evidence type="ECO:0000269" key="2">
    <source>
    </source>
</evidence>
<evidence type="ECO:0000269" key="3">
    <source>
    </source>
</evidence>
<name>IACS_PIG</name>
<proteinExistence type="evidence at protein level"/>
<keyword id="KW-0903">Direct protein sequencing</keyword>
<keyword id="KW-1015">Disulfide bond</keyword>
<keyword id="KW-0646">Protease inhibitor</keyword>
<keyword id="KW-1185">Reference proteome</keyword>
<keyword id="KW-0964">Secreted</keyword>
<keyword id="KW-0722">Serine protease inhibitor</keyword>
<keyword id="KW-0732">Signal</keyword>
<feature type="signal peptide" evidence="2 3">
    <location>
        <begin position="1"/>
        <end position="26"/>
    </location>
</feature>
<feature type="chain" id="PRO_0000016560" description="Sperm-associated acrosin inhibitor">
    <location>
        <begin position="27"/>
        <end position="97"/>
    </location>
</feature>
<feature type="domain" description="Kazal-like" evidence="1">
    <location>
        <begin position="32"/>
        <end position="90"/>
    </location>
</feature>
<feature type="site" description="Reactive bond" evidence="1">
    <location>
        <begin position="50"/>
        <end position="51"/>
    </location>
</feature>
<feature type="disulfide bond">
    <location>
        <begin position="38"/>
        <end position="70"/>
    </location>
</feature>
<feature type="disulfide bond">
    <location>
        <begin position="48"/>
        <end position="67"/>
    </location>
</feature>
<feature type="disulfide bond">
    <location>
        <begin position="56"/>
        <end position="88"/>
    </location>
</feature>
<feature type="sequence variant" description="In one isoform.">
    <location>
        <begin position="27"/>
        <end position="28"/>
    </location>
</feature>
<feature type="sequence variant" description="In major isoform.">
    <location>
        <begin position="95"/>
        <end position="97"/>
    </location>
</feature>
<protein>
    <recommendedName>
        <fullName>Sperm-associated acrosin inhibitor</fullName>
        <shortName>AI</shortName>
    </recommendedName>
</protein>